<organism>
    <name type="scientific">Vibrio campbellii (strain ATCC BAA-1116)</name>
    <dbReference type="NCBI Taxonomy" id="2902295"/>
    <lineage>
        <taxon>Bacteria</taxon>
        <taxon>Pseudomonadati</taxon>
        <taxon>Pseudomonadota</taxon>
        <taxon>Gammaproteobacteria</taxon>
        <taxon>Vibrionales</taxon>
        <taxon>Vibrionaceae</taxon>
        <taxon>Vibrio</taxon>
    </lineage>
</organism>
<keyword id="KW-0050">Antiport</keyword>
<keyword id="KW-0997">Cell inner membrane</keyword>
<keyword id="KW-1003">Cell membrane</keyword>
<keyword id="KW-0406">Ion transport</keyword>
<keyword id="KW-0472">Membrane</keyword>
<keyword id="KW-0915">Sodium</keyword>
<keyword id="KW-0739">Sodium transport</keyword>
<keyword id="KW-0812">Transmembrane</keyword>
<keyword id="KW-1133">Transmembrane helix</keyword>
<keyword id="KW-0813">Transport</keyword>
<dbReference type="EMBL" id="CP000789">
    <property type="protein sequence ID" value="ABU71607.1"/>
    <property type="molecule type" value="Genomic_DNA"/>
</dbReference>
<dbReference type="RefSeq" id="WP_012128255.1">
    <property type="nucleotide sequence ID" value="NC_009783.1"/>
</dbReference>
<dbReference type="SMR" id="A7MYD3"/>
<dbReference type="KEGG" id="vha:VIBHAR_02646"/>
<dbReference type="PATRIC" id="fig|338187.25.peg.60"/>
<dbReference type="Proteomes" id="UP000008152">
    <property type="component" value="Chromosome I"/>
</dbReference>
<dbReference type="GO" id="GO:0005886">
    <property type="term" value="C:plasma membrane"/>
    <property type="evidence" value="ECO:0007669"/>
    <property type="project" value="UniProtKB-SubCell"/>
</dbReference>
<dbReference type="GO" id="GO:0015385">
    <property type="term" value="F:sodium:proton antiporter activity"/>
    <property type="evidence" value="ECO:0007669"/>
    <property type="project" value="TreeGrafter"/>
</dbReference>
<dbReference type="GO" id="GO:0006885">
    <property type="term" value="P:regulation of pH"/>
    <property type="evidence" value="ECO:0007669"/>
    <property type="project" value="InterPro"/>
</dbReference>
<dbReference type="Gene3D" id="1.20.1530.10">
    <property type="entry name" value="Na+/H+ antiporter like domain"/>
    <property type="match status" value="1"/>
</dbReference>
<dbReference type="HAMAP" id="MF_01844">
    <property type="entry name" value="NhaA"/>
    <property type="match status" value="1"/>
</dbReference>
<dbReference type="InterPro" id="IPR023171">
    <property type="entry name" value="Na/H_antiporter_dom_sf"/>
</dbReference>
<dbReference type="InterPro" id="IPR004670">
    <property type="entry name" value="NhaA"/>
</dbReference>
<dbReference type="NCBIfam" id="TIGR00773">
    <property type="entry name" value="NhaA"/>
    <property type="match status" value="1"/>
</dbReference>
<dbReference type="NCBIfam" id="NF007111">
    <property type="entry name" value="PRK09560.1"/>
    <property type="match status" value="1"/>
</dbReference>
<dbReference type="NCBIfam" id="NF007112">
    <property type="entry name" value="PRK09561.1"/>
    <property type="match status" value="1"/>
</dbReference>
<dbReference type="PANTHER" id="PTHR30341:SF0">
    <property type="entry name" value="NA(+)_H(+) ANTIPORTER NHAA"/>
    <property type="match status" value="1"/>
</dbReference>
<dbReference type="PANTHER" id="PTHR30341">
    <property type="entry name" value="SODIUM ION/PROTON ANTIPORTER NHAA-RELATED"/>
    <property type="match status" value="1"/>
</dbReference>
<dbReference type="Pfam" id="PF06965">
    <property type="entry name" value="Na_H_antiport_1"/>
    <property type="match status" value="1"/>
</dbReference>
<gene>
    <name evidence="1" type="primary">nhaA</name>
    <name type="ordered locus">VIBHAR_02646</name>
</gene>
<evidence type="ECO:0000255" key="1">
    <source>
        <dbReference type="HAMAP-Rule" id="MF_01844"/>
    </source>
</evidence>
<reference key="1">
    <citation type="submission" date="2007-08" db="EMBL/GenBank/DDBJ databases">
        <authorList>
            <consortium name="The Vibrio harveyi Genome Sequencing Project"/>
            <person name="Bassler B."/>
            <person name="Clifton S.W."/>
            <person name="Fulton L."/>
            <person name="Delehaunty K."/>
            <person name="Fronick C."/>
            <person name="Harrison M."/>
            <person name="Markivic C."/>
            <person name="Fulton R."/>
            <person name="Tin-Wollam A.-M."/>
            <person name="Shah N."/>
            <person name="Pepin K."/>
            <person name="Nash W."/>
            <person name="Thiruvilangam P."/>
            <person name="Bhonagiri V."/>
            <person name="Waters C."/>
            <person name="Tu K.C."/>
            <person name="Irgon J."/>
            <person name="Wilson R.K."/>
        </authorList>
    </citation>
    <scope>NUCLEOTIDE SEQUENCE [LARGE SCALE GENOMIC DNA]</scope>
    <source>
        <strain>ATCC BAA-1116 / BB120</strain>
    </source>
</reference>
<comment type="function">
    <text evidence="1">Na(+)/H(+) antiporter that extrudes sodium in exchange for external protons.</text>
</comment>
<comment type="catalytic activity">
    <reaction evidence="1">
        <text>Na(+)(in) + 2 H(+)(out) = Na(+)(out) + 2 H(+)(in)</text>
        <dbReference type="Rhea" id="RHEA:29251"/>
        <dbReference type="ChEBI" id="CHEBI:15378"/>
        <dbReference type="ChEBI" id="CHEBI:29101"/>
    </reaction>
    <physiologicalReaction direction="left-to-right" evidence="1">
        <dbReference type="Rhea" id="RHEA:29252"/>
    </physiologicalReaction>
</comment>
<comment type="subcellular location">
    <subcellularLocation>
        <location evidence="1">Cell inner membrane</location>
        <topology evidence="1">Multi-pass membrane protein</topology>
    </subcellularLocation>
</comment>
<comment type="similarity">
    <text evidence="1">Belongs to the NhaA Na(+)/H(+) (TC 2.A.33) antiporter family.</text>
</comment>
<name>NHAA_VIBC1</name>
<proteinExistence type="inferred from homology"/>
<sequence>MNDVIRDFFKMESAGGILLVIAAAIAMTIANSPLGESYQAMLHTYVFGMSVSHWINDGLMAVFFLLIGLEVKRELLEGALKSKETAIFPAIAAVGGMLAPALIYVAFNAGDPEAISGWAIPAATDIAFALGIMALLGKRVPISLKVFLLALAIIDDLGVVVIIALFYTGDLSTMALLVGFAMTGVLFMLNAKEVTKLTPYMIVGAILWFAVLKSGVHATLAGVVIGFAIPLKGKKGEHSPLKHMEHALHPYVAFGILPLFAFANAGISLEGVSMSGLTSMLPLGIALGLLVGKPLGIFTFSWAAVKLGIAKLPQGVNFIHIFAVSVLCGIGFTMSIFISSLAFANVSPEFDTYARLGILMGSTTAAIIGYVLLHFSLPKKAVEEVASEKNA</sequence>
<feature type="chain" id="PRO_0000334459" description="Na(+)/H(+) antiporter NhaA">
    <location>
        <begin position="1"/>
        <end position="391"/>
    </location>
</feature>
<feature type="transmembrane region" description="Helical" evidence="1">
    <location>
        <begin position="14"/>
        <end position="34"/>
    </location>
</feature>
<feature type="transmembrane region" description="Helical" evidence="1">
    <location>
        <begin position="47"/>
        <end position="67"/>
    </location>
</feature>
<feature type="transmembrane region" description="Helical" evidence="1">
    <location>
        <begin position="87"/>
        <end position="107"/>
    </location>
</feature>
<feature type="transmembrane region" description="Helical" evidence="1">
    <location>
        <begin position="117"/>
        <end position="137"/>
    </location>
</feature>
<feature type="transmembrane region" description="Helical" evidence="1">
    <location>
        <begin position="146"/>
        <end position="166"/>
    </location>
</feature>
<feature type="transmembrane region" description="Helical" evidence="1">
    <location>
        <begin position="171"/>
        <end position="191"/>
    </location>
</feature>
<feature type="transmembrane region" description="Helical" evidence="1">
    <location>
        <begin position="205"/>
        <end position="225"/>
    </location>
</feature>
<feature type="transmembrane region" description="Helical" evidence="1">
    <location>
        <begin position="252"/>
        <end position="272"/>
    </location>
</feature>
<feature type="transmembrane region" description="Helical" evidence="1">
    <location>
        <begin position="280"/>
        <end position="300"/>
    </location>
</feature>
<feature type="transmembrane region" description="Helical" evidence="1">
    <location>
        <begin position="318"/>
        <end position="338"/>
    </location>
</feature>
<feature type="transmembrane region" description="Helical" evidence="1">
    <location>
        <begin position="356"/>
        <end position="376"/>
    </location>
</feature>
<protein>
    <recommendedName>
        <fullName evidence="1">Na(+)/H(+) antiporter NhaA</fullName>
    </recommendedName>
    <alternativeName>
        <fullName evidence="1">Sodium/proton antiporter NhaA</fullName>
    </alternativeName>
</protein>
<accession>A7MYD3</accession>